<proteinExistence type="inferred from homology"/>
<organism>
    <name type="scientific">Brucella suis biovar 1 (strain 1330)</name>
    <dbReference type="NCBI Taxonomy" id="204722"/>
    <lineage>
        <taxon>Bacteria</taxon>
        <taxon>Pseudomonadati</taxon>
        <taxon>Pseudomonadota</taxon>
        <taxon>Alphaproteobacteria</taxon>
        <taxon>Hyphomicrobiales</taxon>
        <taxon>Brucellaceae</taxon>
        <taxon>Brucella/Ochrobactrum group</taxon>
        <taxon>Brucella</taxon>
    </lineage>
</organism>
<feature type="chain" id="PRO_0000328701" description="Putative peptide import ATP-binding protein BRA0404/BS1330_II0401">
    <location>
        <begin position="1"/>
        <end position="317"/>
    </location>
</feature>
<feature type="domain" description="ABC transporter" evidence="2">
    <location>
        <begin position="7"/>
        <end position="250"/>
    </location>
</feature>
<feature type="binding site" evidence="2">
    <location>
        <begin position="43"/>
        <end position="50"/>
    </location>
    <ligand>
        <name>ATP</name>
        <dbReference type="ChEBI" id="CHEBI:30616"/>
    </ligand>
</feature>
<protein>
    <recommendedName>
        <fullName>Putative peptide import ATP-binding protein BRA0404/BS1330_II0401</fullName>
        <ecNumber>7.4.2.-</ecNumber>
    </recommendedName>
</protein>
<sequence>MTETPLLSVRGLAKHYQTRSATLKILDNVSFDIARGEVVGLVGESGSGKTTIGRSVLRLIEPTAGQIMFDGADVATLSAREMRRQRRRMQYIFQDPFASLSPRMTIGEILMEGLNIQGIGTKAERLERARKALEQVELPPDTINRYAHEFSGGQRQRIGIARALTLEPDFIVADEPVSALDVSIQAQVVNLLRDLQQRLGLTMLFISHDLAVVEYICDRVIVLYLGRIMEIASSEDLYARPQHPYTRALLSAIPSPDPDARTERQILRGDIPSPANPPSGCVFRTRCPMAIDACATTVPQLREVRPGHFKACIRDNI</sequence>
<name>Y3404_BRUSU</name>
<dbReference type="EC" id="7.4.2.-"/>
<dbReference type="EMBL" id="AE014292">
    <property type="protein sequence ID" value="AAN33601.1"/>
    <property type="molecule type" value="Genomic_DNA"/>
</dbReference>
<dbReference type="EMBL" id="CP002998">
    <property type="protein sequence ID" value="AEM19880.1"/>
    <property type="molecule type" value="Genomic_DNA"/>
</dbReference>
<dbReference type="RefSeq" id="WP_002966203.1">
    <property type="nucleotide sequence ID" value="NZ_KN046805.1"/>
</dbReference>
<dbReference type="SMR" id="Q8FWP2"/>
<dbReference type="KEGG" id="bms:BRA0404"/>
<dbReference type="KEGG" id="bsi:BS1330_II0401"/>
<dbReference type="HOGENOM" id="CLU_000604_1_23_5"/>
<dbReference type="Proteomes" id="UP000007104">
    <property type="component" value="Chromosome II"/>
</dbReference>
<dbReference type="GO" id="GO:0005886">
    <property type="term" value="C:plasma membrane"/>
    <property type="evidence" value="ECO:0007669"/>
    <property type="project" value="UniProtKB-SubCell"/>
</dbReference>
<dbReference type="GO" id="GO:0005524">
    <property type="term" value="F:ATP binding"/>
    <property type="evidence" value="ECO:0007669"/>
    <property type="project" value="UniProtKB-KW"/>
</dbReference>
<dbReference type="GO" id="GO:0016887">
    <property type="term" value="F:ATP hydrolysis activity"/>
    <property type="evidence" value="ECO:0007669"/>
    <property type="project" value="InterPro"/>
</dbReference>
<dbReference type="GO" id="GO:0015833">
    <property type="term" value="P:peptide transport"/>
    <property type="evidence" value="ECO:0007669"/>
    <property type="project" value="UniProtKB-KW"/>
</dbReference>
<dbReference type="GO" id="GO:0015031">
    <property type="term" value="P:protein transport"/>
    <property type="evidence" value="ECO:0007669"/>
    <property type="project" value="UniProtKB-KW"/>
</dbReference>
<dbReference type="GO" id="GO:0055085">
    <property type="term" value="P:transmembrane transport"/>
    <property type="evidence" value="ECO:0007669"/>
    <property type="project" value="UniProtKB-ARBA"/>
</dbReference>
<dbReference type="CDD" id="cd03257">
    <property type="entry name" value="ABC_NikE_OppD_transporters"/>
    <property type="match status" value="1"/>
</dbReference>
<dbReference type="FunFam" id="3.40.50.300:FF:000016">
    <property type="entry name" value="Oligopeptide ABC transporter ATP-binding component"/>
    <property type="match status" value="1"/>
</dbReference>
<dbReference type="Gene3D" id="3.40.50.300">
    <property type="entry name" value="P-loop containing nucleotide triphosphate hydrolases"/>
    <property type="match status" value="1"/>
</dbReference>
<dbReference type="InterPro" id="IPR003593">
    <property type="entry name" value="AAA+_ATPase"/>
</dbReference>
<dbReference type="InterPro" id="IPR050319">
    <property type="entry name" value="ABC_transp_ATP-bind"/>
</dbReference>
<dbReference type="InterPro" id="IPR003439">
    <property type="entry name" value="ABC_transporter-like_ATP-bd"/>
</dbReference>
<dbReference type="InterPro" id="IPR017871">
    <property type="entry name" value="ABC_transporter-like_CS"/>
</dbReference>
<dbReference type="InterPro" id="IPR013563">
    <property type="entry name" value="Oligopep_ABC_C"/>
</dbReference>
<dbReference type="InterPro" id="IPR027417">
    <property type="entry name" value="P-loop_NTPase"/>
</dbReference>
<dbReference type="NCBIfam" id="TIGR01727">
    <property type="entry name" value="oligo_HPY"/>
    <property type="match status" value="1"/>
</dbReference>
<dbReference type="PANTHER" id="PTHR43776:SF7">
    <property type="entry name" value="D,D-DIPEPTIDE TRANSPORT ATP-BINDING PROTEIN DDPF-RELATED"/>
    <property type="match status" value="1"/>
</dbReference>
<dbReference type="PANTHER" id="PTHR43776">
    <property type="entry name" value="TRANSPORT ATP-BINDING PROTEIN"/>
    <property type="match status" value="1"/>
</dbReference>
<dbReference type="Pfam" id="PF00005">
    <property type="entry name" value="ABC_tran"/>
    <property type="match status" value="1"/>
</dbReference>
<dbReference type="Pfam" id="PF08352">
    <property type="entry name" value="oligo_HPY"/>
    <property type="match status" value="1"/>
</dbReference>
<dbReference type="SMART" id="SM00382">
    <property type="entry name" value="AAA"/>
    <property type="match status" value="1"/>
</dbReference>
<dbReference type="SUPFAM" id="SSF52540">
    <property type="entry name" value="P-loop containing nucleoside triphosphate hydrolases"/>
    <property type="match status" value="1"/>
</dbReference>
<dbReference type="PROSITE" id="PS00211">
    <property type="entry name" value="ABC_TRANSPORTER_1"/>
    <property type="match status" value="1"/>
</dbReference>
<dbReference type="PROSITE" id="PS50893">
    <property type="entry name" value="ABC_TRANSPORTER_2"/>
    <property type="match status" value="1"/>
</dbReference>
<gene>
    <name type="ordered locus">BRA0404</name>
    <name type="ordered locus">BS1330_II0401</name>
</gene>
<reference key="1">
    <citation type="journal article" date="2002" name="Proc. Natl. Acad. Sci. U.S.A.">
        <title>The Brucella suis genome reveals fundamental similarities between animal and plant pathogens and symbionts.</title>
        <authorList>
            <person name="Paulsen I.T."/>
            <person name="Seshadri R."/>
            <person name="Nelson K.E."/>
            <person name="Eisen J.A."/>
            <person name="Heidelberg J.F."/>
            <person name="Read T.D."/>
            <person name="Dodson R.J."/>
            <person name="Umayam L.A."/>
            <person name="Brinkac L.M."/>
            <person name="Beanan M.J."/>
            <person name="Daugherty S.C."/>
            <person name="DeBoy R.T."/>
            <person name="Durkin A.S."/>
            <person name="Kolonay J.F."/>
            <person name="Madupu R."/>
            <person name="Nelson W.C."/>
            <person name="Ayodeji B."/>
            <person name="Kraul M."/>
            <person name="Shetty J."/>
            <person name="Malek J.A."/>
            <person name="Van Aken S.E."/>
            <person name="Riedmuller S."/>
            <person name="Tettelin H."/>
            <person name="Gill S.R."/>
            <person name="White O."/>
            <person name="Salzberg S.L."/>
            <person name="Hoover D.L."/>
            <person name="Lindler L.E."/>
            <person name="Halling S.M."/>
            <person name="Boyle S.M."/>
            <person name="Fraser C.M."/>
        </authorList>
    </citation>
    <scope>NUCLEOTIDE SEQUENCE [LARGE SCALE GENOMIC DNA]</scope>
    <source>
        <strain>1330</strain>
    </source>
</reference>
<reference key="2">
    <citation type="journal article" date="2011" name="J. Bacteriol.">
        <title>Revised genome sequence of Brucella suis 1330.</title>
        <authorList>
            <person name="Tae H."/>
            <person name="Shallom S."/>
            <person name="Settlage R."/>
            <person name="Preston D."/>
            <person name="Adams L.G."/>
            <person name="Garner H.R."/>
        </authorList>
    </citation>
    <scope>NUCLEOTIDE SEQUENCE [LARGE SCALE GENOMIC DNA]</scope>
    <source>
        <strain>1330</strain>
    </source>
</reference>
<evidence type="ECO:0000250" key="1"/>
<evidence type="ECO:0000255" key="2">
    <source>
        <dbReference type="PROSITE-ProRule" id="PRU00434"/>
    </source>
</evidence>
<evidence type="ECO:0000305" key="3"/>
<accession>Q8FWP2</accession>
<accession>G0KCE2</accession>
<comment type="function">
    <text evidence="1">Probably part of an ABC transporter complex that could be involved in peptide import. Probably responsible for energy coupling to the transport system (By similarity).</text>
</comment>
<comment type="subunit">
    <text evidence="3">The complex is composed of two ATP-binding proteins (BRA0404 and BRA0405), two transmembrane proteins (BRA0407 and BRA0408) and a solute-binding protein (BRA0409).</text>
</comment>
<comment type="subcellular location">
    <subcellularLocation>
        <location evidence="3">Cell inner membrane</location>
        <topology evidence="3">Peripheral membrane protein</topology>
    </subcellularLocation>
</comment>
<comment type="similarity">
    <text evidence="3">Belongs to the ABC transporter superfamily.</text>
</comment>
<keyword id="KW-0067">ATP-binding</keyword>
<keyword id="KW-0997">Cell inner membrane</keyword>
<keyword id="KW-1003">Cell membrane</keyword>
<keyword id="KW-0472">Membrane</keyword>
<keyword id="KW-0547">Nucleotide-binding</keyword>
<keyword id="KW-0571">Peptide transport</keyword>
<keyword id="KW-0653">Protein transport</keyword>
<keyword id="KW-1278">Translocase</keyword>
<keyword id="KW-0813">Transport</keyword>